<name>FA53C_MOUSE</name>
<comment type="similarity">
    <text evidence="3">Belongs to the FAM53 family.</text>
</comment>
<organism>
    <name type="scientific">Mus musculus</name>
    <name type="common">Mouse</name>
    <dbReference type="NCBI Taxonomy" id="10090"/>
    <lineage>
        <taxon>Eukaryota</taxon>
        <taxon>Metazoa</taxon>
        <taxon>Chordata</taxon>
        <taxon>Craniata</taxon>
        <taxon>Vertebrata</taxon>
        <taxon>Euteleostomi</taxon>
        <taxon>Mammalia</taxon>
        <taxon>Eutheria</taxon>
        <taxon>Euarchontoglires</taxon>
        <taxon>Glires</taxon>
        <taxon>Rodentia</taxon>
        <taxon>Myomorpha</taxon>
        <taxon>Muroidea</taxon>
        <taxon>Muridae</taxon>
        <taxon>Murinae</taxon>
        <taxon>Mus</taxon>
        <taxon>Mus</taxon>
    </lineage>
</organism>
<proteinExistence type="evidence at protein level"/>
<sequence>MITLITEQLQKQTLDELKCTRFSVSLPLPDHADIPNCGDPFQLVSEGASWRGLPHCSCAEFQDSLNFSYHPSGLSLHLRPPSRGNSPKEPPLSQVLSPEPPDPEKLPVPPAPPSKRHCRSLSVPVDLSRWQPVWRPAPSKLWTPIKHRGNAGGGGPQVPQQSPPKRVSSLRFLQAPSASSQCAPAHRPYSPPFFSLALAQDSAQPCATSPQSGSWESDAESLSPCPPQRRFSLSPSLGPQASRFLPSARSSPASSPELPWRPRGLRNLPRSRSQPCDLDARKTGVKRRHEEDCRRLRPSLDFDKMNQKPYSGGLCLQETAREEGSNVSPPWFMACSPPPLSASCSPVEGSSQVLSESEEEEEGSVRWERQALSKRTLCQQDFGDLDLNLIEEN</sequence>
<dbReference type="EMBL" id="BC057111">
    <property type="protein sequence ID" value="AAH57111.1"/>
    <property type="molecule type" value="mRNA"/>
</dbReference>
<dbReference type="EMBL" id="AK044469">
    <property type="protein sequence ID" value="BAC31938.1"/>
    <property type="molecule type" value="mRNA"/>
</dbReference>
<dbReference type="EMBL" id="AK154214">
    <property type="protein sequence ID" value="BAE32439.1"/>
    <property type="molecule type" value="mRNA"/>
</dbReference>
<dbReference type="CCDS" id="CCDS29134.1"/>
<dbReference type="RefSeq" id="NP_001344385.1">
    <property type="nucleotide sequence ID" value="NM_001357456.1"/>
</dbReference>
<dbReference type="RefSeq" id="NP_780313.1">
    <property type="nucleotide sequence ID" value="NM_175104.5"/>
</dbReference>
<dbReference type="RefSeq" id="XP_006526214.1">
    <property type="nucleotide sequence ID" value="XM_006526151.3"/>
</dbReference>
<dbReference type="RefSeq" id="XP_006526215.1">
    <property type="nucleotide sequence ID" value="XM_006526152.4"/>
</dbReference>
<dbReference type="BioGRID" id="211370">
    <property type="interactions" value="1"/>
</dbReference>
<dbReference type="FunCoup" id="Q8BXQ8">
    <property type="interactions" value="2014"/>
</dbReference>
<dbReference type="IntAct" id="Q8BXQ8">
    <property type="interactions" value="1"/>
</dbReference>
<dbReference type="STRING" id="10090.ENSMUSP00000037034"/>
<dbReference type="iPTMnet" id="Q8BXQ8"/>
<dbReference type="PhosphoSitePlus" id="Q8BXQ8"/>
<dbReference type="jPOST" id="Q8BXQ8"/>
<dbReference type="PaxDb" id="10090-ENSMUSP00000037034"/>
<dbReference type="PeptideAtlas" id="Q8BXQ8"/>
<dbReference type="ProteomicsDB" id="271844"/>
<dbReference type="Antibodypedia" id="45322">
    <property type="antibodies" value="48 antibodies from 14 providers"/>
</dbReference>
<dbReference type="DNASU" id="66306"/>
<dbReference type="Ensembl" id="ENSMUST00000049281.12">
    <property type="protein sequence ID" value="ENSMUSP00000037034.6"/>
    <property type="gene ID" value="ENSMUSG00000034300.18"/>
</dbReference>
<dbReference type="Ensembl" id="ENSMUST00000097622.4">
    <property type="protein sequence ID" value="ENSMUSP00000095226.4"/>
    <property type="gene ID" value="ENSMUSG00000034300.18"/>
</dbReference>
<dbReference type="GeneID" id="66306"/>
<dbReference type="KEGG" id="mmu:66306"/>
<dbReference type="UCSC" id="uc008eli.1">
    <property type="organism name" value="mouse"/>
</dbReference>
<dbReference type="AGR" id="MGI:1913556"/>
<dbReference type="CTD" id="51307"/>
<dbReference type="MGI" id="MGI:1913556">
    <property type="gene designation" value="Fam53c"/>
</dbReference>
<dbReference type="VEuPathDB" id="HostDB:ENSMUSG00000034300"/>
<dbReference type="eggNOG" id="ENOG502RW5C">
    <property type="taxonomic scope" value="Eukaryota"/>
</dbReference>
<dbReference type="GeneTree" id="ENSGT00530000063371"/>
<dbReference type="HOGENOM" id="CLU_054215_1_0_1"/>
<dbReference type="InParanoid" id="Q8BXQ8"/>
<dbReference type="OMA" id="WRGLSHC"/>
<dbReference type="OrthoDB" id="10026856at2759"/>
<dbReference type="PhylomeDB" id="Q8BXQ8"/>
<dbReference type="TreeFam" id="TF332095"/>
<dbReference type="BioGRID-ORCS" id="66306">
    <property type="hits" value="1 hit in 76 CRISPR screens"/>
</dbReference>
<dbReference type="PRO" id="PR:Q8BXQ8"/>
<dbReference type="Proteomes" id="UP000000589">
    <property type="component" value="Chromosome 18"/>
</dbReference>
<dbReference type="RNAct" id="Q8BXQ8">
    <property type="molecule type" value="protein"/>
</dbReference>
<dbReference type="Bgee" id="ENSMUSG00000034300">
    <property type="expression patterns" value="Expressed in animal zygote and 247 other cell types or tissues"/>
</dbReference>
<dbReference type="ExpressionAtlas" id="Q8BXQ8">
    <property type="expression patterns" value="baseline and differential"/>
</dbReference>
<dbReference type="InterPro" id="IPR029356">
    <property type="entry name" value="FAM53"/>
</dbReference>
<dbReference type="PANTHER" id="PTHR28567">
    <property type="entry name" value="PROTEIN FAM53A-LIKE ISOFORM X1"/>
    <property type="match status" value="1"/>
</dbReference>
<dbReference type="PANTHER" id="PTHR28567:SF4">
    <property type="entry name" value="PROTEIN FAM53C"/>
    <property type="match status" value="1"/>
</dbReference>
<dbReference type="Pfam" id="PF15242">
    <property type="entry name" value="FAM53"/>
    <property type="match status" value="1"/>
</dbReference>
<reference key="1">
    <citation type="journal article" date="2005" name="Science">
        <title>The transcriptional landscape of the mammalian genome.</title>
        <authorList>
            <person name="Carninci P."/>
            <person name="Kasukawa T."/>
            <person name="Katayama S."/>
            <person name="Gough J."/>
            <person name="Frith M.C."/>
            <person name="Maeda N."/>
            <person name="Oyama R."/>
            <person name="Ravasi T."/>
            <person name="Lenhard B."/>
            <person name="Wells C."/>
            <person name="Kodzius R."/>
            <person name="Shimokawa K."/>
            <person name="Bajic V.B."/>
            <person name="Brenner S.E."/>
            <person name="Batalov S."/>
            <person name="Forrest A.R."/>
            <person name="Zavolan M."/>
            <person name="Davis M.J."/>
            <person name="Wilming L.G."/>
            <person name="Aidinis V."/>
            <person name="Allen J.E."/>
            <person name="Ambesi-Impiombato A."/>
            <person name="Apweiler R."/>
            <person name="Aturaliya R.N."/>
            <person name="Bailey T.L."/>
            <person name="Bansal M."/>
            <person name="Baxter L."/>
            <person name="Beisel K.W."/>
            <person name="Bersano T."/>
            <person name="Bono H."/>
            <person name="Chalk A.M."/>
            <person name="Chiu K.P."/>
            <person name="Choudhary V."/>
            <person name="Christoffels A."/>
            <person name="Clutterbuck D.R."/>
            <person name="Crowe M.L."/>
            <person name="Dalla E."/>
            <person name="Dalrymple B.P."/>
            <person name="de Bono B."/>
            <person name="Della Gatta G."/>
            <person name="di Bernardo D."/>
            <person name="Down T."/>
            <person name="Engstrom P."/>
            <person name="Fagiolini M."/>
            <person name="Faulkner G."/>
            <person name="Fletcher C.F."/>
            <person name="Fukushima T."/>
            <person name="Furuno M."/>
            <person name="Futaki S."/>
            <person name="Gariboldi M."/>
            <person name="Georgii-Hemming P."/>
            <person name="Gingeras T.R."/>
            <person name="Gojobori T."/>
            <person name="Green R.E."/>
            <person name="Gustincich S."/>
            <person name="Harbers M."/>
            <person name="Hayashi Y."/>
            <person name="Hensch T.K."/>
            <person name="Hirokawa N."/>
            <person name="Hill D."/>
            <person name="Huminiecki L."/>
            <person name="Iacono M."/>
            <person name="Ikeo K."/>
            <person name="Iwama A."/>
            <person name="Ishikawa T."/>
            <person name="Jakt M."/>
            <person name="Kanapin A."/>
            <person name="Katoh M."/>
            <person name="Kawasawa Y."/>
            <person name="Kelso J."/>
            <person name="Kitamura H."/>
            <person name="Kitano H."/>
            <person name="Kollias G."/>
            <person name="Krishnan S.P."/>
            <person name="Kruger A."/>
            <person name="Kummerfeld S.K."/>
            <person name="Kurochkin I.V."/>
            <person name="Lareau L.F."/>
            <person name="Lazarevic D."/>
            <person name="Lipovich L."/>
            <person name="Liu J."/>
            <person name="Liuni S."/>
            <person name="McWilliam S."/>
            <person name="Madan Babu M."/>
            <person name="Madera M."/>
            <person name="Marchionni L."/>
            <person name="Matsuda H."/>
            <person name="Matsuzawa S."/>
            <person name="Miki H."/>
            <person name="Mignone F."/>
            <person name="Miyake S."/>
            <person name="Morris K."/>
            <person name="Mottagui-Tabar S."/>
            <person name="Mulder N."/>
            <person name="Nakano N."/>
            <person name="Nakauchi H."/>
            <person name="Ng P."/>
            <person name="Nilsson R."/>
            <person name="Nishiguchi S."/>
            <person name="Nishikawa S."/>
            <person name="Nori F."/>
            <person name="Ohara O."/>
            <person name="Okazaki Y."/>
            <person name="Orlando V."/>
            <person name="Pang K.C."/>
            <person name="Pavan W.J."/>
            <person name="Pavesi G."/>
            <person name="Pesole G."/>
            <person name="Petrovsky N."/>
            <person name="Piazza S."/>
            <person name="Reed J."/>
            <person name="Reid J.F."/>
            <person name="Ring B.Z."/>
            <person name="Ringwald M."/>
            <person name="Rost B."/>
            <person name="Ruan Y."/>
            <person name="Salzberg S.L."/>
            <person name="Sandelin A."/>
            <person name="Schneider C."/>
            <person name="Schoenbach C."/>
            <person name="Sekiguchi K."/>
            <person name="Semple C.A."/>
            <person name="Seno S."/>
            <person name="Sessa L."/>
            <person name="Sheng Y."/>
            <person name="Shibata Y."/>
            <person name="Shimada H."/>
            <person name="Shimada K."/>
            <person name="Silva D."/>
            <person name="Sinclair B."/>
            <person name="Sperling S."/>
            <person name="Stupka E."/>
            <person name="Sugiura K."/>
            <person name="Sultana R."/>
            <person name="Takenaka Y."/>
            <person name="Taki K."/>
            <person name="Tammoja K."/>
            <person name="Tan S.L."/>
            <person name="Tang S."/>
            <person name="Taylor M.S."/>
            <person name="Tegner J."/>
            <person name="Teichmann S.A."/>
            <person name="Ueda H.R."/>
            <person name="van Nimwegen E."/>
            <person name="Verardo R."/>
            <person name="Wei C.L."/>
            <person name="Yagi K."/>
            <person name="Yamanishi H."/>
            <person name="Zabarovsky E."/>
            <person name="Zhu S."/>
            <person name="Zimmer A."/>
            <person name="Hide W."/>
            <person name="Bult C."/>
            <person name="Grimmond S.M."/>
            <person name="Teasdale R.D."/>
            <person name="Liu E.T."/>
            <person name="Brusic V."/>
            <person name="Quackenbush J."/>
            <person name="Wahlestedt C."/>
            <person name="Mattick J.S."/>
            <person name="Hume D.A."/>
            <person name="Kai C."/>
            <person name="Sasaki D."/>
            <person name="Tomaru Y."/>
            <person name="Fukuda S."/>
            <person name="Kanamori-Katayama M."/>
            <person name="Suzuki M."/>
            <person name="Aoki J."/>
            <person name="Arakawa T."/>
            <person name="Iida J."/>
            <person name="Imamura K."/>
            <person name="Itoh M."/>
            <person name="Kato T."/>
            <person name="Kawaji H."/>
            <person name="Kawagashira N."/>
            <person name="Kawashima T."/>
            <person name="Kojima M."/>
            <person name="Kondo S."/>
            <person name="Konno H."/>
            <person name="Nakano K."/>
            <person name="Ninomiya N."/>
            <person name="Nishio T."/>
            <person name="Okada M."/>
            <person name="Plessy C."/>
            <person name="Shibata K."/>
            <person name="Shiraki T."/>
            <person name="Suzuki S."/>
            <person name="Tagami M."/>
            <person name="Waki K."/>
            <person name="Watahiki A."/>
            <person name="Okamura-Oho Y."/>
            <person name="Suzuki H."/>
            <person name="Kawai J."/>
            <person name="Hayashizaki Y."/>
        </authorList>
    </citation>
    <scope>NUCLEOTIDE SEQUENCE [LARGE SCALE MRNA]</scope>
    <source>
        <strain>C57BL/6J</strain>
        <strain>NOD</strain>
        <tissue>Retina</tissue>
    </source>
</reference>
<reference key="2">
    <citation type="journal article" date="2004" name="Genome Res.">
        <title>The status, quality, and expansion of the NIH full-length cDNA project: the Mammalian Gene Collection (MGC).</title>
        <authorList>
            <consortium name="The MGC Project Team"/>
        </authorList>
    </citation>
    <scope>NUCLEOTIDE SEQUENCE [LARGE SCALE MRNA]</scope>
    <source>
        <strain>C57BL/6J</strain>
        <tissue>Brain</tissue>
    </source>
</reference>
<reference key="3">
    <citation type="journal article" date="2010" name="Cell">
        <title>A tissue-specific atlas of mouse protein phosphorylation and expression.</title>
        <authorList>
            <person name="Huttlin E.L."/>
            <person name="Jedrychowski M.P."/>
            <person name="Elias J.E."/>
            <person name="Goswami T."/>
            <person name="Rad R."/>
            <person name="Beausoleil S.A."/>
            <person name="Villen J."/>
            <person name="Haas W."/>
            <person name="Sowa M.E."/>
            <person name="Gygi S.P."/>
        </authorList>
    </citation>
    <scope>PHOSPHORYLATION [LARGE SCALE ANALYSIS] AT SER-232; SER-234 AND SER-255</scope>
    <scope>IDENTIFICATION BY MASS SPECTROMETRY [LARGE SCALE ANALYSIS]</scope>
    <source>
        <tissue>Brain</tissue>
        <tissue>Heart</tissue>
        <tissue>Kidney</tissue>
        <tissue>Lung</tissue>
        <tissue>Testis</tissue>
    </source>
</reference>
<keyword id="KW-0007">Acetylation</keyword>
<keyword id="KW-0597">Phosphoprotein</keyword>
<keyword id="KW-1185">Reference proteome</keyword>
<accession>Q8BXQ8</accession>
<accession>Q3U4J2</accession>
<feature type="chain" id="PRO_0000189547" description="Protein FAM53C">
    <location>
        <begin position="1"/>
        <end position="393"/>
    </location>
</feature>
<feature type="region of interest" description="Disordered" evidence="2">
    <location>
        <begin position="77"/>
        <end position="120"/>
    </location>
</feature>
<feature type="region of interest" description="Disordered" evidence="2">
    <location>
        <begin position="141"/>
        <end position="167"/>
    </location>
</feature>
<feature type="region of interest" description="Disordered" evidence="2">
    <location>
        <begin position="204"/>
        <end position="283"/>
    </location>
</feature>
<feature type="region of interest" description="Disordered" evidence="2">
    <location>
        <begin position="343"/>
        <end position="365"/>
    </location>
</feature>
<feature type="compositionally biased region" description="Polar residues" evidence="2">
    <location>
        <begin position="204"/>
        <end position="215"/>
    </location>
</feature>
<feature type="compositionally biased region" description="Low complexity" evidence="2">
    <location>
        <begin position="241"/>
        <end position="256"/>
    </location>
</feature>
<feature type="compositionally biased region" description="Low complexity" evidence="2">
    <location>
        <begin position="343"/>
        <end position="355"/>
    </location>
</feature>
<feature type="modified residue" description="N-acetylmethionine" evidence="1">
    <location>
        <position position="1"/>
    </location>
</feature>
<feature type="modified residue" description="Phosphoserine" evidence="1">
    <location>
        <position position="122"/>
    </location>
</feature>
<feature type="modified residue" description="Phosphoserine" evidence="1">
    <location>
        <position position="162"/>
    </location>
</feature>
<feature type="modified residue" description="Phosphoserine" evidence="5">
    <location>
        <position position="232"/>
    </location>
</feature>
<feature type="modified residue" description="Phosphoserine" evidence="5">
    <location>
        <position position="234"/>
    </location>
</feature>
<feature type="modified residue" description="Phosphoserine" evidence="5">
    <location>
        <position position="255"/>
    </location>
</feature>
<feature type="modified residue" description="Phosphoserine" evidence="1">
    <location>
        <position position="273"/>
    </location>
</feature>
<feature type="modified residue" description="Phosphoserine" evidence="1">
    <location>
        <position position="299"/>
    </location>
</feature>
<gene>
    <name evidence="4" type="primary">Fam53c</name>
</gene>
<evidence type="ECO:0000250" key="1">
    <source>
        <dbReference type="UniProtKB" id="Q9NYF3"/>
    </source>
</evidence>
<evidence type="ECO:0000256" key="2">
    <source>
        <dbReference type="SAM" id="MobiDB-lite"/>
    </source>
</evidence>
<evidence type="ECO:0000305" key="3"/>
<evidence type="ECO:0000312" key="4">
    <source>
        <dbReference type="MGI" id="MGI:1913556"/>
    </source>
</evidence>
<evidence type="ECO:0007744" key="5">
    <source>
    </source>
</evidence>
<protein>
    <recommendedName>
        <fullName evidence="3">Protein FAM53C</fullName>
    </recommendedName>
</protein>